<name>NEP3_DROME</name>
<evidence type="ECO:0000250" key="1">
    <source>
        <dbReference type="UniProtKB" id="P08473"/>
    </source>
</evidence>
<evidence type="ECO:0000250" key="2">
    <source>
        <dbReference type="UniProtKB" id="Q8T062"/>
    </source>
</evidence>
<evidence type="ECO:0000255" key="3"/>
<evidence type="ECO:0000255" key="4">
    <source>
        <dbReference type="PROSITE-ProRule" id="PRU00498"/>
    </source>
</evidence>
<evidence type="ECO:0000255" key="5">
    <source>
        <dbReference type="PROSITE-ProRule" id="PRU01233"/>
    </source>
</evidence>
<evidence type="ECO:0000255" key="6">
    <source>
        <dbReference type="PROSITE-ProRule" id="PRU10095"/>
    </source>
</evidence>
<evidence type="ECO:0000269" key="7">
    <source>
    </source>
</evidence>
<evidence type="ECO:0000269" key="8">
    <source>
    </source>
</evidence>
<evidence type="ECO:0000303" key="9">
    <source>
    </source>
</evidence>
<evidence type="ECO:0000305" key="10"/>
<evidence type="ECO:0000312" key="11">
    <source>
        <dbReference type="EMBL" id="AAM12295.1"/>
    </source>
</evidence>
<evidence type="ECO:0000312" key="12">
    <source>
        <dbReference type="EMBL" id="AEW12887.1"/>
    </source>
</evidence>
<evidence type="ECO:0000312" key="13">
    <source>
        <dbReference type="FlyBase" id="FBgn0031081"/>
    </source>
</evidence>
<evidence type="ECO:0000312" key="14">
    <source>
        <dbReference type="Proteomes" id="UP000000803"/>
    </source>
</evidence>
<gene>
    <name evidence="9 13" type="primary">Nep3</name>
    <name evidence="13" type="ORF">CG9565</name>
</gene>
<dbReference type="EC" id="3.4.24.11" evidence="2"/>
<dbReference type="EMBL" id="AE014298">
    <property type="protein sequence ID" value="AAF45370.2"/>
    <property type="molecule type" value="Genomic_DNA"/>
</dbReference>
<dbReference type="EMBL" id="AE014298">
    <property type="protein sequence ID" value="AFH07487.1"/>
    <property type="molecule type" value="Genomic_DNA"/>
</dbReference>
<dbReference type="EMBL" id="AE014298">
    <property type="protein sequence ID" value="AFH07488.1"/>
    <property type="molecule type" value="Genomic_DNA"/>
</dbReference>
<dbReference type="EMBL" id="AY095202">
    <property type="protein sequence ID" value="AAM12295.1"/>
    <property type="molecule type" value="mRNA"/>
</dbReference>
<dbReference type="EMBL" id="BT132915">
    <property type="protein sequence ID" value="AEW12887.1"/>
    <property type="molecule type" value="mRNA"/>
</dbReference>
<dbReference type="RefSeq" id="NP_001245775.1">
    <property type="nucleotide sequence ID" value="NM_001258846.1"/>
</dbReference>
<dbReference type="RefSeq" id="NP_001245776.1">
    <property type="nucleotide sequence ID" value="NM_001258847.2"/>
</dbReference>
<dbReference type="RefSeq" id="NP_523417.2">
    <property type="nucleotide sequence ID" value="NM_078693.3"/>
</dbReference>
<dbReference type="SMR" id="Q9W5Y0"/>
<dbReference type="FunCoup" id="Q9W5Y0">
    <property type="interactions" value="136"/>
</dbReference>
<dbReference type="IntAct" id="Q9W5Y0">
    <property type="interactions" value="7"/>
</dbReference>
<dbReference type="STRING" id="7227.FBpp0300207"/>
<dbReference type="MEROPS" id="M13.A14"/>
<dbReference type="GlyCosmos" id="Q9W5Y0">
    <property type="glycosylation" value="11 sites, No reported glycans"/>
</dbReference>
<dbReference type="GlyGen" id="Q9W5Y0">
    <property type="glycosylation" value="11 sites"/>
</dbReference>
<dbReference type="PaxDb" id="7227-FBpp0300207"/>
<dbReference type="DNASU" id="33005"/>
<dbReference type="EnsemblMetazoa" id="FBtr0070000">
    <property type="protein sequence ID" value="FBpp0070000"/>
    <property type="gene ID" value="FBgn0031081"/>
</dbReference>
<dbReference type="EnsemblMetazoa" id="FBtr0307554">
    <property type="protein sequence ID" value="FBpp0300206"/>
    <property type="gene ID" value="FBgn0031081"/>
</dbReference>
<dbReference type="EnsemblMetazoa" id="FBtr0307555">
    <property type="protein sequence ID" value="FBpp0300207"/>
    <property type="gene ID" value="FBgn0031081"/>
</dbReference>
<dbReference type="GeneID" id="33005"/>
<dbReference type="KEGG" id="dme:Dmel_CG9565"/>
<dbReference type="UCSC" id="CG9565-RA">
    <property type="organism name" value="d. melanogaster"/>
</dbReference>
<dbReference type="AGR" id="FB:FBgn0031081"/>
<dbReference type="CTD" id="33005"/>
<dbReference type="FlyBase" id="FBgn0031081">
    <property type="gene designation" value="Nep3"/>
</dbReference>
<dbReference type="VEuPathDB" id="VectorBase:FBgn0031081"/>
<dbReference type="eggNOG" id="KOG3624">
    <property type="taxonomic scope" value="Eukaryota"/>
</dbReference>
<dbReference type="GeneTree" id="ENSGT00940000166608"/>
<dbReference type="HOGENOM" id="CLU_006187_8_1_1"/>
<dbReference type="InParanoid" id="Q9W5Y0"/>
<dbReference type="OMA" id="FGWAQVW"/>
<dbReference type="OrthoDB" id="6475849at2759"/>
<dbReference type="PhylomeDB" id="Q9W5Y0"/>
<dbReference type="Reactome" id="R-DME-2022377">
    <property type="pathway name" value="Metabolism of Angiotensinogen to Angiotensins"/>
</dbReference>
<dbReference type="Reactome" id="R-DME-5578768">
    <property type="pathway name" value="Physiological factors"/>
</dbReference>
<dbReference type="Reactome" id="R-DME-6798695">
    <property type="pathway name" value="Neutrophil degranulation"/>
</dbReference>
<dbReference type="SignaLink" id="Q9W5Y0"/>
<dbReference type="BioGRID-ORCS" id="33005">
    <property type="hits" value="0 hits in 3 CRISPR screens"/>
</dbReference>
<dbReference type="GenomeRNAi" id="33005"/>
<dbReference type="PRO" id="PR:Q9W5Y0"/>
<dbReference type="Proteomes" id="UP000000803">
    <property type="component" value="Chromosome X"/>
</dbReference>
<dbReference type="Bgee" id="FBgn0031081">
    <property type="expression patterns" value="Expressed in adult class III enteroendocrine cell in adult midgut (Drosophila) and 118 other cell types or tissues"/>
</dbReference>
<dbReference type="ExpressionAtlas" id="Q9W5Y0">
    <property type="expression patterns" value="baseline and differential"/>
</dbReference>
<dbReference type="GO" id="GO:0016020">
    <property type="term" value="C:membrane"/>
    <property type="evidence" value="ECO:0000255"/>
    <property type="project" value="FlyBase"/>
</dbReference>
<dbReference type="GO" id="GO:0005886">
    <property type="term" value="C:plasma membrane"/>
    <property type="evidence" value="ECO:0000318"/>
    <property type="project" value="GO_Central"/>
</dbReference>
<dbReference type="GO" id="GO:0046872">
    <property type="term" value="F:metal ion binding"/>
    <property type="evidence" value="ECO:0007669"/>
    <property type="project" value="UniProtKB-KW"/>
</dbReference>
<dbReference type="GO" id="GO:0004222">
    <property type="term" value="F:metalloendopeptidase activity"/>
    <property type="evidence" value="ECO:0000318"/>
    <property type="project" value="GO_Central"/>
</dbReference>
<dbReference type="GO" id="GO:0008237">
    <property type="term" value="F:metallopeptidase activity"/>
    <property type="evidence" value="ECO:0000255"/>
    <property type="project" value="FlyBase"/>
</dbReference>
<dbReference type="GO" id="GO:0016486">
    <property type="term" value="P:peptide hormone processing"/>
    <property type="evidence" value="ECO:0000250"/>
    <property type="project" value="FlyBase"/>
</dbReference>
<dbReference type="GO" id="GO:0016485">
    <property type="term" value="P:protein processing"/>
    <property type="evidence" value="ECO:0000318"/>
    <property type="project" value="GO_Central"/>
</dbReference>
<dbReference type="GO" id="GO:0006508">
    <property type="term" value="P:proteolysis"/>
    <property type="evidence" value="ECO:0000255"/>
    <property type="project" value="FlyBase"/>
</dbReference>
<dbReference type="CDD" id="cd08662">
    <property type="entry name" value="M13"/>
    <property type="match status" value="1"/>
</dbReference>
<dbReference type="FunFam" id="1.10.1380.10:FF:000006">
    <property type="entry name" value="Uncharacterized protein, isoform A"/>
    <property type="match status" value="1"/>
</dbReference>
<dbReference type="Gene3D" id="3.40.390.10">
    <property type="entry name" value="Collagenase (Catalytic Domain)"/>
    <property type="match status" value="1"/>
</dbReference>
<dbReference type="Gene3D" id="1.10.1380.10">
    <property type="entry name" value="Neutral endopeptidase , domain2"/>
    <property type="match status" value="1"/>
</dbReference>
<dbReference type="InterPro" id="IPR024079">
    <property type="entry name" value="MetalloPept_cat_dom_sf"/>
</dbReference>
<dbReference type="InterPro" id="IPR000718">
    <property type="entry name" value="Peptidase_M13"/>
</dbReference>
<dbReference type="InterPro" id="IPR018497">
    <property type="entry name" value="Peptidase_M13_C"/>
</dbReference>
<dbReference type="InterPro" id="IPR042089">
    <property type="entry name" value="Peptidase_M13_dom_2"/>
</dbReference>
<dbReference type="InterPro" id="IPR008753">
    <property type="entry name" value="Peptidase_M13_N"/>
</dbReference>
<dbReference type="PANTHER" id="PTHR11733:SF167">
    <property type="entry name" value="FI17812P1-RELATED"/>
    <property type="match status" value="1"/>
</dbReference>
<dbReference type="PANTHER" id="PTHR11733">
    <property type="entry name" value="ZINC METALLOPROTEASE FAMILY M13 NEPRILYSIN-RELATED"/>
    <property type="match status" value="1"/>
</dbReference>
<dbReference type="Pfam" id="PF01431">
    <property type="entry name" value="Peptidase_M13"/>
    <property type="match status" value="1"/>
</dbReference>
<dbReference type="Pfam" id="PF05649">
    <property type="entry name" value="Peptidase_M13_N"/>
    <property type="match status" value="1"/>
</dbReference>
<dbReference type="PRINTS" id="PR00786">
    <property type="entry name" value="NEPRILYSIN"/>
</dbReference>
<dbReference type="SUPFAM" id="SSF55486">
    <property type="entry name" value="Metalloproteases ('zincins'), catalytic domain"/>
    <property type="match status" value="1"/>
</dbReference>
<dbReference type="PROSITE" id="PS51885">
    <property type="entry name" value="NEPRILYSIN"/>
    <property type="match status" value="1"/>
</dbReference>
<dbReference type="PROSITE" id="PS00142">
    <property type="entry name" value="ZINC_PROTEASE"/>
    <property type="match status" value="1"/>
</dbReference>
<comment type="function">
    <text evidence="8">Metalloendoprotease which is required in the dorsal paired medial neurons for the proper formation of long-term (LTM) and middle-term memories (MTM). Also required in the mushroom body neurons where it functions redundantly with neprilysins Nep2 and Nep4 in normal LTM formation.</text>
</comment>
<comment type="catalytic activity">
    <reaction evidence="2">
        <text>Preferential cleavage of polypeptides between hydrophobic residues, particularly with Phe or Tyr at P1'.</text>
        <dbReference type="EC" id="3.4.24.11"/>
    </reaction>
</comment>
<comment type="cofactor">
    <cofactor evidence="1">
        <name>Zn(2+)</name>
        <dbReference type="ChEBI" id="CHEBI:29105"/>
    </cofactor>
    <text evidence="1">Binds 1 zinc ion per subunit.</text>
</comment>
<comment type="subcellular location">
    <subcellularLocation>
        <location evidence="10">Cell membrane</location>
        <topology evidence="10">Single-pass type II membrane protein</topology>
    </subcellularLocation>
</comment>
<comment type="developmental stage">
    <text evidence="7">In embryos, expressed in the central nervous system from stages 14 to 17. In third-instar larvae, expressed in the brain, ventral ganglion and midgut.</text>
</comment>
<comment type="disruption phenotype">
    <text evidence="7 8">RNAi-mediated knockdown in the dorsal paired medial neurons impairs middle-term (MTM) and long-term memory (LTM), but has no effect on normal aversion learning and anesthesia-resistant memory (ARM) (PubMed:27629706). RNAi-mediated knockdown in all mushroom body neurons has no effect on learning, ARM and LTM (PubMed:27629706). However, simultaneous knockdown with Nep2 or Nep4 does impair LTM, and simultaneous knockdown with both Nep2 and Nep4 results in a further reduction in LTM formation (PubMed:27629706). Wild-type females mated to males that undergo RNAi-mediated knockdown, lay the same number of eggs and have a similar hatch rate to those mated to wild-type males (PubMed:24395329).</text>
</comment>
<comment type="similarity">
    <text evidence="5 10">Belongs to the peptidase M13 family.</text>
</comment>
<protein>
    <recommendedName>
        <fullName evidence="9">Neprilysin-3</fullName>
        <ecNumber evidence="2">3.4.24.11</ecNumber>
    </recommendedName>
</protein>
<keyword id="KW-1003">Cell membrane</keyword>
<keyword id="KW-1015">Disulfide bond</keyword>
<keyword id="KW-0325">Glycoprotein</keyword>
<keyword id="KW-0378">Hydrolase</keyword>
<keyword id="KW-0472">Membrane</keyword>
<keyword id="KW-0479">Metal-binding</keyword>
<keyword id="KW-0482">Metalloprotease</keyword>
<keyword id="KW-0645">Protease</keyword>
<keyword id="KW-1185">Reference proteome</keyword>
<keyword id="KW-0735">Signal-anchor</keyword>
<keyword id="KW-0812">Transmembrane</keyword>
<keyword id="KW-1133">Transmembrane helix</keyword>
<keyword id="KW-0862">Zinc</keyword>
<sequence length="786" mass="89759">MTRYKQTEFTEDDSSSIGGIQLNEATGHTGMQIRYHTARATWNWRSRNKTEKWLLITTFVMAITIFTLLIVLFTDGGSSDATKHVLHVQPHQKDCPSGNELPCLNKHCIFASSEILKSIDVTVDPCDDFYGYSCNQWIKNNPIPEGKSTWGTFGKLEQMNQLIIRNVLEKPAKSFKSDAERKAKVYYESCLDADEHMEKLGAKPMNDLLLQIGGWNVTKSGYNVANWTMGHTLKILHNKYNFNCLFGWAIGEDDKNSSRHVIQIDQGGLTLPTADYYNNKTDNHRKVLNEYIEYMTKVCVLLGANESDARAQMIGVINFEKKLANITIPLEDRRNEEAMYHPMQLRQLSKLAPFLNWTDHFDNAMQMVGRRVTDDEVVVVYAPDFLKNLSDIILKMEQTEEGKITLNNYLVWQAVRTLTSCLSKPFRDAYKGVRKALMGSDGGEEIWRYCVSDTNNVVGFAVGAIFVRQAFHGESKPAAEQMIAEIREAFKMNLQNLTWVDKQTREKAIEKANQISDMIGFPDYILDPVELDKKYAELNITPNAYFENNIQVAIYNLKSNLKRLDQPVNKTNWGMTPQTVNAYYTPTKNQIVFPAGILQTPFFDINNPKSLNFGAMGVVMGHELTHAFDDQGREYDKFGNINRWWDSKSIERFNEKSECIARQYSGYKMNGRTLNGKQTLGENIADNGGLKAAYHAYQRTKSDRDVDILKLPGLNLTHSQLFFVSFAQVWCSSTTDETNLLQMEKDPHSPSQFRVIGTLSNMKEFAEVFQCKPGKRMNPTEKCEVW</sequence>
<reference evidence="14" key="1">
    <citation type="journal article" date="2000" name="Science">
        <title>The genome sequence of Drosophila melanogaster.</title>
        <authorList>
            <person name="Adams M.D."/>
            <person name="Celniker S.E."/>
            <person name="Holt R.A."/>
            <person name="Evans C.A."/>
            <person name="Gocayne J.D."/>
            <person name="Amanatides P.G."/>
            <person name="Scherer S.E."/>
            <person name="Li P.W."/>
            <person name="Hoskins R.A."/>
            <person name="Galle R.F."/>
            <person name="George R.A."/>
            <person name="Lewis S.E."/>
            <person name="Richards S."/>
            <person name="Ashburner M."/>
            <person name="Henderson S.N."/>
            <person name="Sutton G.G."/>
            <person name="Wortman J.R."/>
            <person name="Yandell M.D."/>
            <person name="Zhang Q."/>
            <person name="Chen L.X."/>
            <person name="Brandon R.C."/>
            <person name="Rogers Y.-H.C."/>
            <person name="Blazej R.G."/>
            <person name="Champe M."/>
            <person name="Pfeiffer B.D."/>
            <person name="Wan K.H."/>
            <person name="Doyle C."/>
            <person name="Baxter E.G."/>
            <person name="Helt G."/>
            <person name="Nelson C.R."/>
            <person name="Miklos G.L.G."/>
            <person name="Abril J.F."/>
            <person name="Agbayani A."/>
            <person name="An H.-J."/>
            <person name="Andrews-Pfannkoch C."/>
            <person name="Baldwin D."/>
            <person name="Ballew R.M."/>
            <person name="Basu A."/>
            <person name="Baxendale J."/>
            <person name="Bayraktaroglu L."/>
            <person name="Beasley E.M."/>
            <person name="Beeson K.Y."/>
            <person name="Benos P.V."/>
            <person name="Berman B.P."/>
            <person name="Bhandari D."/>
            <person name="Bolshakov S."/>
            <person name="Borkova D."/>
            <person name="Botchan M.R."/>
            <person name="Bouck J."/>
            <person name="Brokstein P."/>
            <person name="Brottier P."/>
            <person name="Burtis K.C."/>
            <person name="Busam D.A."/>
            <person name="Butler H."/>
            <person name="Cadieu E."/>
            <person name="Center A."/>
            <person name="Chandra I."/>
            <person name="Cherry J.M."/>
            <person name="Cawley S."/>
            <person name="Dahlke C."/>
            <person name="Davenport L.B."/>
            <person name="Davies P."/>
            <person name="de Pablos B."/>
            <person name="Delcher A."/>
            <person name="Deng Z."/>
            <person name="Mays A.D."/>
            <person name="Dew I."/>
            <person name="Dietz S.M."/>
            <person name="Dodson K."/>
            <person name="Doup L.E."/>
            <person name="Downes M."/>
            <person name="Dugan-Rocha S."/>
            <person name="Dunkov B.C."/>
            <person name="Dunn P."/>
            <person name="Durbin K.J."/>
            <person name="Evangelista C.C."/>
            <person name="Ferraz C."/>
            <person name="Ferriera S."/>
            <person name="Fleischmann W."/>
            <person name="Fosler C."/>
            <person name="Gabrielian A.E."/>
            <person name="Garg N.S."/>
            <person name="Gelbart W.M."/>
            <person name="Glasser K."/>
            <person name="Glodek A."/>
            <person name="Gong F."/>
            <person name="Gorrell J.H."/>
            <person name="Gu Z."/>
            <person name="Guan P."/>
            <person name="Harris M."/>
            <person name="Harris N.L."/>
            <person name="Harvey D.A."/>
            <person name="Heiman T.J."/>
            <person name="Hernandez J.R."/>
            <person name="Houck J."/>
            <person name="Hostin D."/>
            <person name="Houston K.A."/>
            <person name="Howland T.J."/>
            <person name="Wei M.-H."/>
            <person name="Ibegwam C."/>
            <person name="Jalali M."/>
            <person name="Kalush F."/>
            <person name="Karpen G.H."/>
            <person name="Ke Z."/>
            <person name="Kennison J.A."/>
            <person name="Ketchum K.A."/>
            <person name="Kimmel B.E."/>
            <person name="Kodira C.D."/>
            <person name="Kraft C.L."/>
            <person name="Kravitz S."/>
            <person name="Kulp D."/>
            <person name="Lai Z."/>
            <person name="Lasko P."/>
            <person name="Lei Y."/>
            <person name="Levitsky A.A."/>
            <person name="Li J.H."/>
            <person name="Li Z."/>
            <person name="Liang Y."/>
            <person name="Lin X."/>
            <person name="Liu X."/>
            <person name="Mattei B."/>
            <person name="McIntosh T.C."/>
            <person name="McLeod M.P."/>
            <person name="McPherson D."/>
            <person name="Merkulov G."/>
            <person name="Milshina N.V."/>
            <person name="Mobarry C."/>
            <person name="Morris J."/>
            <person name="Moshrefi A."/>
            <person name="Mount S.M."/>
            <person name="Moy M."/>
            <person name="Murphy B."/>
            <person name="Murphy L."/>
            <person name="Muzny D.M."/>
            <person name="Nelson D.L."/>
            <person name="Nelson D.R."/>
            <person name="Nelson K.A."/>
            <person name="Nixon K."/>
            <person name="Nusskern D.R."/>
            <person name="Pacleb J.M."/>
            <person name="Palazzolo M."/>
            <person name="Pittman G.S."/>
            <person name="Pan S."/>
            <person name="Pollard J."/>
            <person name="Puri V."/>
            <person name="Reese M.G."/>
            <person name="Reinert K."/>
            <person name="Remington K."/>
            <person name="Saunders R.D.C."/>
            <person name="Scheeler F."/>
            <person name="Shen H."/>
            <person name="Shue B.C."/>
            <person name="Siden-Kiamos I."/>
            <person name="Simpson M."/>
            <person name="Skupski M.P."/>
            <person name="Smith T.J."/>
            <person name="Spier E."/>
            <person name="Spradling A.C."/>
            <person name="Stapleton M."/>
            <person name="Strong R."/>
            <person name="Sun E."/>
            <person name="Svirskas R."/>
            <person name="Tector C."/>
            <person name="Turner R."/>
            <person name="Venter E."/>
            <person name="Wang A.H."/>
            <person name="Wang X."/>
            <person name="Wang Z.-Y."/>
            <person name="Wassarman D.A."/>
            <person name="Weinstock G.M."/>
            <person name="Weissenbach J."/>
            <person name="Williams S.M."/>
            <person name="Woodage T."/>
            <person name="Worley K.C."/>
            <person name="Wu D."/>
            <person name="Yang S."/>
            <person name="Yao Q.A."/>
            <person name="Ye J."/>
            <person name="Yeh R.-F."/>
            <person name="Zaveri J.S."/>
            <person name="Zhan M."/>
            <person name="Zhang G."/>
            <person name="Zhao Q."/>
            <person name="Zheng L."/>
            <person name="Zheng X.H."/>
            <person name="Zhong F.N."/>
            <person name="Zhong W."/>
            <person name="Zhou X."/>
            <person name="Zhu S.C."/>
            <person name="Zhu X."/>
            <person name="Smith H.O."/>
            <person name="Gibbs R.A."/>
            <person name="Myers E.W."/>
            <person name="Rubin G.M."/>
            <person name="Venter J.C."/>
        </authorList>
    </citation>
    <scope>NUCLEOTIDE SEQUENCE [LARGE SCALE GENOMIC DNA]</scope>
    <source>
        <strain evidence="14">Berkeley</strain>
    </source>
</reference>
<reference evidence="14" key="2">
    <citation type="journal article" date="2002" name="Genome Biol.">
        <title>Annotation of the Drosophila melanogaster euchromatic genome: a systematic review.</title>
        <authorList>
            <person name="Misra S."/>
            <person name="Crosby M.A."/>
            <person name="Mungall C.J."/>
            <person name="Matthews B.B."/>
            <person name="Campbell K.S."/>
            <person name="Hradecky P."/>
            <person name="Huang Y."/>
            <person name="Kaminker J.S."/>
            <person name="Millburn G.H."/>
            <person name="Prochnik S.E."/>
            <person name="Smith C.D."/>
            <person name="Tupy J.L."/>
            <person name="Whitfield E.J."/>
            <person name="Bayraktaroglu L."/>
            <person name="Berman B.P."/>
            <person name="Bettencourt B.R."/>
            <person name="Celniker S.E."/>
            <person name="de Grey A.D.N.J."/>
            <person name="Drysdale R.A."/>
            <person name="Harris N.L."/>
            <person name="Richter J."/>
            <person name="Russo S."/>
            <person name="Schroeder A.J."/>
            <person name="Shu S.Q."/>
            <person name="Stapleton M."/>
            <person name="Yamada C."/>
            <person name="Ashburner M."/>
            <person name="Gelbart W.M."/>
            <person name="Rubin G.M."/>
            <person name="Lewis S.E."/>
        </authorList>
    </citation>
    <scope>GENOME REANNOTATION</scope>
    <source>
        <strain evidence="14">Berkeley</strain>
    </source>
</reference>
<reference evidence="11" key="3">
    <citation type="journal article" date="2002" name="Genome Biol.">
        <title>A Drosophila full-length cDNA resource.</title>
        <authorList>
            <person name="Stapleton M."/>
            <person name="Carlson J.W."/>
            <person name="Brokstein P."/>
            <person name="Yu C."/>
            <person name="Champe M."/>
            <person name="George R.A."/>
            <person name="Guarin H."/>
            <person name="Kronmiller B."/>
            <person name="Pacleb J.M."/>
            <person name="Park S."/>
            <person name="Wan K.H."/>
            <person name="Rubin G.M."/>
            <person name="Celniker S.E."/>
        </authorList>
    </citation>
    <scope>NUCLEOTIDE SEQUENCE [LARGE SCALE MRNA]</scope>
    <source>
        <strain evidence="11">Berkeley</strain>
        <tissue evidence="11">Embryo</tissue>
    </source>
</reference>
<reference evidence="12" key="4">
    <citation type="submission" date="2011-12" db="EMBL/GenBank/DDBJ databases">
        <authorList>
            <person name="Carlson J."/>
            <person name="Booth B."/>
            <person name="Frise E."/>
            <person name="Park S."/>
            <person name="Wan K."/>
            <person name="Yu C."/>
            <person name="Celniker S."/>
        </authorList>
    </citation>
    <scope>NUCLEOTIDE SEQUENCE [LARGE SCALE MRNA]</scope>
</reference>
<reference evidence="10" key="5">
    <citation type="journal article" date="2014" name="Genetics">
        <title>Neprilysins: an evolutionarily conserved family of metalloproteases that play important roles in reproduction in Drosophila.</title>
        <authorList>
            <person name="Sitnik J.L."/>
            <person name="Francis C."/>
            <person name="Hens K."/>
            <person name="Huybrechts R."/>
            <person name="Wolfner M.F."/>
            <person name="Callaerts P."/>
        </authorList>
    </citation>
    <scope>DEVELOPMENTAL STAGE</scope>
    <scope>DISRUPTION PHENOTYPE</scope>
</reference>
<reference evidence="10" key="6">
    <citation type="journal article" date="2016" name="J. Neurosci.">
        <title>Drosophila neprilysins are involved in middle-term and long-term memory.</title>
        <authorList>
            <person name="Turrel O."/>
            <person name="Lampin-Saint-Amaux A."/>
            <person name="Preat T."/>
            <person name="Goguel V."/>
        </authorList>
    </citation>
    <scope>FUNCTION</scope>
    <scope>DISRUPTION PHENOTYPE</scope>
</reference>
<proteinExistence type="evidence at transcript level"/>
<organism evidence="14">
    <name type="scientific">Drosophila melanogaster</name>
    <name type="common">Fruit fly</name>
    <dbReference type="NCBI Taxonomy" id="7227"/>
    <lineage>
        <taxon>Eukaryota</taxon>
        <taxon>Metazoa</taxon>
        <taxon>Ecdysozoa</taxon>
        <taxon>Arthropoda</taxon>
        <taxon>Hexapoda</taxon>
        <taxon>Insecta</taxon>
        <taxon>Pterygota</taxon>
        <taxon>Neoptera</taxon>
        <taxon>Endopterygota</taxon>
        <taxon>Diptera</taxon>
        <taxon>Brachycera</taxon>
        <taxon>Muscomorpha</taxon>
        <taxon>Ephydroidea</taxon>
        <taxon>Drosophilidae</taxon>
        <taxon>Drosophila</taxon>
        <taxon>Sophophora</taxon>
    </lineage>
</organism>
<accession>Q9W5Y0</accession>
<accession>Q8SWS1</accession>
<feature type="chain" id="PRO_0000441992" description="Neprilysin-3">
    <location>
        <begin position="1"/>
        <end position="786"/>
    </location>
</feature>
<feature type="topological domain" description="Cytoplasmic" evidence="10">
    <location>
        <begin position="1"/>
        <end position="52"/>
    </location>
</feature>
<feature type="transmembrane region" description="Helical; Signal-anchor for type II membrane protein" evidence="3">
    <location>
        <begin position="53"/>
        <end position="73"/>
    </location>
</feature>
<feature type="topological domain" description="Extracellular" evidence="10">
    <location>
        <begin position="74"/>
        <end position="786"/>
    </location>
</feature>
<feature type="domain" description="Peptidase M13" evidence="5">
    <location>
        <begin position="102"/>
        <end position="786"/>
    </location>
</feature>
<feature type="active site" evidence="5 6">
    <location>
        <position position="623"/>
    </location>
</feature>
<feature type="active site" description="Proton donor" evidence="5">
    <location>
        <position position="686"/>
    </location>
</feature>
<feature type="binding site" evidence="5 6">
    <location>
        <position position="622"/>
    </location>
    <ligand>
        <name>Zn(2+)</name>
        <dbReference type="ChEBI" id="CHEBI:29105"/>
        <note>catalytic</note>
    </ligand>
</feature>
<feature type="binding site" evidence="5 6">
    <location>
        <position position="626"/>
    </location>
    <ligand>
        <name>Zn(2+)</name>
        <dbReference type="ChEBI" id="CHEBI:29105"/>
        <note>catalytic</note>
    </ligand>
</feature>
<feature type="binding site" evidence="5">
    <location>
        <position position="682"/>
    </location>
    <ligand>
        <name>Zn(2+)</name>
        <dbReference type="ChEBI" id="CHEBI:29105"/>
        <note>catalytic</note>
    </ligand>
</feature>
<feature type="glycosylation site" description="N-linked (GlcNAc...) asparagine" evidence="4">
    <location>
        <position position="216"/>
    </location>
</feature>
<feature type="glycosylation site" description="N-linked (GlcNAc...) asparagine" evidence="4">
    <location>
        <position position="226"/>
    </location>
</feature>
<feature type="glycosylation site" description="N-linked (GlcNAc...) asparagine" evidence="4">
    <location>
        <position position="256"/>
    </location>
</feature>
<feature type="glycosylation site" description="N-linked (GlcNAc...) asparagine" evidence="4">
    <location>
        <position position="279"/>
    </location>
</feature>
<feature type="glycosylation site" description="N-linked (GlcNAc...) asparagine" evidence="4">
    <location>
        <position position="305"/>
    </location>
</feature>
<feature type="glycosylation site" description="N-linked (GlcNAc...) asparagine" evidence="4">
    <location>
        <position position="325"/>
    </location>
</feature>
<feature type="glycosylation site" description="N-linked (GlcNAc...) asparagine" evidence="4">
    <location>
        <position position="356"/>
    </location>
</feature>
<feature type="glycosylation site" description="N-linked (GlcNAc...) asparagine" evidence="4">
    <location>
        <position position="388"/>
    </location>
</feature>
<feature type="glycosylation site" description="N-linked (GlcNAc...) asparagine" evidence="4">
    <location>
        <position position="496"/>
    </location>
</feature>
<feature type="glycosylation site" description="N-linked (GlcNAc...) asparagine" evidence="4">
    <location>
        <position position="569"/>
    </location>
</feature>
<feature type="glycosylation site" description="N-linked (GlcNAc...) asparagine" evidence="4">
    <location>
        <position position="715"/>
    </location>
</feature>
<feature type="disulfide bond" evidence="5">
    <location>
        <begin position="103"/>
        <end position="108"/>
    </location>
</feature>
<feature type="disulfide bond" evidence="5">
    <location>
        <begin position="126"/>
        <end position="771"/>
    </location>
</feature>
<feature type="disulfide bond" evidence="5">
    <location>
        <begin position="134"/>
        <end position="731"/>
    </location>
</feature>
<feature type="disulfide bond" evidence="5">
    <location>
        <begin position="190"/>
        <end position="450"/>
    </location>
</feature>
<feature type="disulfide bond" evidence="5">
    <location>
        <begin position="659"/>
        <end position="783"/>
    </location>
</feature>
<feature type="sequence conflict" description="In Ref. 3; AAM12295." evidence="10" ref="3">
    <original>K</original>
    <variation>R</variation>
    <location>
        <position position="49"/>
    </location>
</feature>